<feature type="chain" id="PRO_1000119936" description="Exodeoxyribonuclease 7 small subunit">
    <location>
        <begin position="1"/>
        <end position="74"/>
    </location>
</feature>
<gene>
    <name evidence="1" type="primary">xseB</name>
    <name type="ordered locus">LCK_00480</name>
</gene>
<accession>B1MXR1</accession>
<sequence>MSETKTFEDKLQQLEGIVSELEKGDRPLETALADFQTGVGLVKELQGTLKHAEETLAKVMSDDDKLTDLELTND</sequence>
<proteinExistence type="inferred from homology"/>
<name>EX7S_LEUCK</name>
<protein>
    <recommendedName>
        <fullName evidence="1">Exodeoxyribonuclease 7 small subunit</fullName>
        <ecNumber evidence="1">3.1.11.6</ecNumber>
    </recommendedName>
    <alternativeName>
        <fullName evidence="1">Exodeoxyribonuclease VII small subunit</fullName>
        <shortName evidence="1">Exonuclease VII small subunit</shortName>
    </alternativeName>
</protein>
<reference key="1">
    <citation type="journal article" date="2008" name="J. Bacteriol.">
        <title>Complete genome sequence of Leuconostoc citreum KM20.</title>
        <authorList>
            <person name="Kim J.F."/>
            <person name="Jeong H."/>
            <person name="Lee J.-S."/>
            <person name="Choi S.-H."/>
            <person name="Ha M."/>
            <person name="Hur C.-G."/>
            <person name="Kim J.-S."/>
            <person name="Lee S."/>
            <person name="Park H.-S."/>
            <person name="Park Y.-H."/>
            <person name="Oh T.K."/>
        </authorList>
    </citation>
    <scope>NUCLEOTIDE SEQUENCE [LARGE SCALE GENOMIC DNA]</scope>
    <source>
        <strain>KM20</strain>
    </source>
</reference>
<keyword id="KW-0963">Cytoplasm</keyword>
<keyword id="KW-0269">Exonuclease</keyword>
<keyword id="KW-0378">Hydrolase</keyword>
<keyword id="KW-0540">Nuclease</keyword>
<keyword id="KW-1185">Reference proteome</keyword>
<comment type="function">
    <text evidence="1">Bidirectionally degrades single-stranded DNA into large acid-insoluble oligonucleotides, which are then degraded further into small acid-soluble oligonucleotides.</text>
</comment>
<comment type="catalytic activity">
    <reaction evidence="1">
        <text>Exonucleolytic cleavage in either 5'- to 3'- or 3'- to 5'-direction to yield nucleoside 5'-phosphates.</text>
        <dbReference type="EC" id="3.1.11.6"/>
    </reaction>
</comment>
<comment type="subunit">
    <text evidence="1">Heterooligomer composed of large and small subunits.</text>
</comment>
<comment type="subcellular location">
    <subcellularLocation>
        <location evidence="1">Cytoplasm</location>
    </subcellularLocation>
</comment>
<comment type="similarity">
    <text evidence="1">Belongs to the XseB family.</text>
</comment>
<organism>
    <name type="scientific">Leuconostoc citreum (strain KM20)</name>
    <dbReference type="NCBI Taxonomy" id="349519"/>
    <lineage>
        <taxon>Bacteria</taxon>
        <taxon>Bacillati</taxon>
        <taxon>Bacillota</taxon>
        <taxon>Bacilli</taxon>
        <taxon>Lactobacillales</taxon>
        <taxon>Lactobacillaceae</taxon>
        <taxon>Leuconostoc</taxon>
    </lineage>
</organism>
<evidence type="ECO:0000255" key="1">
    <source>
        <dbReference type="HAMAP-Rule" id="MF_00337"/>
    </source>
</evidence>
<dbReference type="EC" id="3.1.11.6" evidence="1"/>
<dbReference type="EMBL" id="DQ489736">
    <property type="protein sequence ID" value="ACA82313.1"/>
    <property type="molecule type" value="Genomic_DNA"/>
</dbReference>
<dbReference type="RefSeq" id="WP_004903115.1">
    <property type="nucleotide sequence ID" value="NC_010471.1"/>
</dbReference>
<dbReference type="SMR" id="B1MXR1"/>
<dbReference type="STRING" id="349519.LCK_00480"/>
<dbReference type="KEGG" id="lci:LCK_00480"/>
<dbReference type="eggNOG" id="COG1722">
    <property type="taxonomic scope" value="Bacteria"/>
</dbReference>
<dbReference type="HOGENOM" id="CLU_145918_3_2_9"/>
<dbReference type="OrthoDB" id="9798666at2"/>
<dbReference type="Proteomes" id="UP000002166">
    <property type="component" value="Chromosome"/>
</dbReference>
<dbReference type="GO" id="GO:0005829">
    <property type="term" value="C:cytosol"/>
    <property type="evidence" value="ECO:0007669"/>
    <property type="project" value="TreeGrafter"/>
</dbReference>
<dbReference type="GO" id="GO:0009318">
    <property type="term" value="C:exodeoxyribonuclease VII complex"/>
    <property type="evidence" value="ECO:0007669"/>
    <property type="project" value="InterPro"/>
</dbReference>
<dbReference type="GO" id="GO:0008855">
    <property type="term" value="F:exodeoxyribonuclease VII activity"/>
    <property type="evidence" value="ECO:0007669"/>
    <property type="project" value="UniProtKB-UniRule"/>
</dbReference>
<dbReference type="GO" id="GO:0006308">
    <property type="term" value="P:DNA catabolic process"/>
    <property type="evidence" value="ECO:0007669"/>
    <property type="project" value="UniProtKB-UniRule"/>
</dbReference>
<dbReference type="Gene3D" id="1.10.287.1040">
    <property type="entry name" value="Exonuclease VII, small subunit"/>
    <property type="match status" value="1"/>
</dbReference>
<dbReference type="HAMAP" id="MF_00337">
    <property type="entry name" value="Exonuc_7_S"/>
    <property type="match status" value="1"/>
</dbReference>
<dbReference type="InterPro" id="IPR003761">
    <property type="entry name" value="Exonuc_VII_S"/>
</dbReference>
<dbReference type="InterPro" id="IPR037004">
    <property type="entry name" value="Exonuc_VII_ssu_sf"/>
</dbReference>
<dbReference type="NCBIfam" id="NF002138">
    <property type="entry name" value="PRK00977.1-2"/>
    <property type="match status" value="1"/>
</dbReference>
<dbReference type="NCBIfam" id="TIGR01280">
    <property type="entry name" value="xseB"/>
    <property type="match status" value="1"/>
</dbReference>
<dbReference type="PANTHER" id="PTHR34137">
    <property type="entry name" value="EXODEOXYRIBONUCLEASE 7 SMALL SUBUNIT"/>
    <property type="match status" value="1"/>
</dbReference>
<dbReference type="PANTHER" id="PTHR34137:SF1">
    <property type="entry name" value="EXODEOXYRIBONUCLEASE 7 SMALL SUBUNIT"/>
    <property type="match status" value="1"/>
</dbReference>
<dbReference type="Pfam" id="PF02609">
    <property type="entry name" value="Exonuc_VII_S"/>
    <property type="match status" value="1"/>
</dbReference>
<dbReference type="PIRSF" id="PIRSF006488">
    <property type="entry name" value="Exonuc_VII_S"/>
    <property type="match status" value="1"/>
</dbReference>
<dbReference type="SUPFAM" id="SSF116842">
    <property type="entry name" value="XseB-like"/>
    <property type="match status" value="1"/>
</dbReference>